<name>APY3_ARATH</name>
<comment type="function">
    <text evidence="1">Catalyzes the hydrolysis of phosphoanhydride bonds of nucleoside tri- and di-phosphates.</text>
</comment>
<comment type="catalytic activity">
    <reaction>
        <text>a ribonucleoside 5'-triphosphate + 2 H2O = a ribonucleoside 5'-phosphate + 2 phosphate + 2 H(+)</text>
        <dbReference type="Rhea" id="RHEA:36795"/>
        <dbReference type="ChEBI" id="CHEBI:15377"/>
        <dbReference type="ChEBI" id="CHEBI:15378"/>
        <dbReference type="ChEBI" id="CHEBI:43474"/>
        <dbReference type="ChEBI" id="CHEBI:58043"/>
        <dbReference type="ChEBI" id="CHEBI:61557"/>
        <dbReference type="EC" id="3.6.1.5"/>
    </reaction>
</comment>
<comment type="cofactor">
    <cofactor evidence="1">
        <name>Ca(2+)</name>
        <dbReference type="ChEBI" id="CHEBI:29108"/>
    </cofactor>
</comment>
<comment type="subcellular location">
    <subcellularLocation>
        <location evidence="1">Membrane</location>
        <topology evidence="1">Single-pass type II membrane protein</topology>
    </subcellularLocation>
</comment>
<comment type="alternative products">
    <event type="alternative splicing"/>
    <isoform>
        <id>Q9XI62-1</id>
        <name>1</name>
        <sequence type="displayed"/>
    </isoform>
    <text>A number of isoforms are produced. According to EST sequences.</text>
</comment>
<comment type="tissue specificity">
    <text evidence="3">Expressed in the initiation zone of lateral root and in the lateral root tip, the adaxial junction of lateral shoots with the stems, and in the abscission zone of flower organs. Not expressed in the rosette leaves.</text>
</comment>
<comment type="disruption phenotype">
    <text evidence="3">No visible phenotype.</text>
</comment>
<comment type="similarity">
    <text evidence="4">Belongs to the GDA1/CD39 NTPase family.</text>
</comment>
<gene>
    <name type="primary">APY3</name>
    <name type="ordered locus">At1g14240</name>
    <name type="ORF">F7A19.34</name>
</gene>
<keyword id="KW-0025">Alternative splicing</keyword>
<keyword id="KW-0067">ATP-binding</keyword>
<keyword id="KW-0106">Calcium</keyword>
<keyword id="KW-0325">Glycoprotein</keyword>
<keyword id="KW-0378">Hydrolase</keyword>
<keyword id="KW-0472">Membrane</keyword>
<keyword id="KW-0547">Nucleotide-binding</keyword>
<keyword id="KW-1185">Reference proteome</keyword>
<keyword id="KW-0735">Signal-anchor</keyword>
<keyword id="KW-0812">Transmembrane</keyword>
<keyword id="KW-1133">Transmembrane helix</keyword>
<dbReference type="EC" id="3.6.1.5"/>
<dbReference type="EMBL" id="JF830008">
    <property type="protein sequence ID" value="AEJ38084.1"/>
    <property type="molecule type" value="mRNA"/>
</dbReference>
<dbReference type="EMBL" id="AC007576">
    <property type="protein sequence ID" value="AAD39311.1"/>
    <property type="molecule type" value="Genomic_DNA"/>
</dbReference>
<dbReference type="EMBL" id="CP002684">
    <property type="protein sequence ID" value="AEE29127.1"/>
    <property type="molecule type" value="Genomic_DNA"/>
</dbReference>
<dbReference type="EMBL" id="CP002684">
    <property type="protein sequence ID" value="AEE29128.1"/>
    <property type="molecule type" value="Genomic_DNA"/>
</dbReference>
<dbReference type="EMBL" id="CP002684">
    <property type="protein sequence ID" value="AEE29130.1"/>
    <property type="molecule type" value="Genomic_DNA"/>
</dbReference>
<dbReference type="EMBL" id="BT006000">
    <property type="protein sequence ID" value="AAO64935.1"/>
    <property type="molecule type" value="mRNA"/>
</dbReference>
<dbReference type="EMBL" id="AK227399">
    <property type="protein sequence ID" value="BAE99403.1"/>
    <property type="molecule type" value="mRNA"/>
</dbReference>
<dbReference type="EMBL" id="AK317332">
    <property type="protein sequence ID" value="BAH20006.1"/>
    <property type="molecule type" value="mRNA"/>
</dbReference>
<dbReference type="PIR" id="D86276">
    <property type="entry name" value="D86276"/>
</dbReference>
<dbReference type="RefSeq" id="NP_001117284.1">
    <molecule id="Q9XI62-1"/>
    <property type="nucleotide sequence ID" value="NM_001123812.2"/>
</dbReference>
<dbReference type="RefSeq" id="NP_172876.1">
    <molecule id="Q9XI62-1"/>
    <property type="nucleotide sequence ID" value="NM_101290.5"/>
</dbReference>
<dbReference type="RefSeq" id="NP_973822.2">
    <molecule id="Q9XI62-1"/>
    <property type="nucleotide sequence ID" value="NM_202093.4"/>
</dbReference>
<dbReference type="SMR" id="Q9XI62"/>
<dbReference type="FunCoup" id="Q9XI62">
    <property type="interactions" value="426"/>
</dbReference>
<dbReference type="STRING" id="3702.Q9XI62"/>
<dbReference type="GlyCosmos" id="Q9XI62">
    <property type="glycosylation" value="4 sites, No reported glycans"/>
</dbReference>
<dbReference type="GlyGen" id="Q9XI62">
    <property type="glycosylation" value="4 sites"/>
</dbReference>
<dbReference type="PaxDb" id="3702-AT1G14240.2"/>
<dbReference type="EnsemblPlants" id="AT1G14240.1">
    <molecule id="Q9XI62-1"/>
    <property type="protein sequence ID" value="AT1G14240.1"/>
    <property type="gene ID" value="AT1G14240"/>
</dbReference>
<dbReference type="EnsemblPlants" id="AT1G14240.2">
    <molecule id="Q9XI62-1"/>
    <property type="protein sequence ID" value="AT1G14240.2"/>
    <property type="gene ID" value="AT1G14240"/>
</dbReference>
<dbReference type="EnsemblPlants" id="AT1G14240.4">
    <molecule id="Q9XI62-1"/>
    <property type="protein sequence ID" value="AT1G14240.4"/>
    <property type="gene ID" value="AT1G14240"/>
</dbReference>
<dbReference type="GeneID" id="837985"/>
<dbReference type="Gramene" id="AT1G14240.1">
    <molecule id="Q9XI62-1"/>
    <property type="protein sequence ID" value="AT1G14240.1"/>
    <property type="gene ID" value="AT1G14240"/>
</dbReference>
<dbReference type="Gramene" id="AT1G14240.2">
    <molecule id="Q9XI62-1"/>
    <property type="protein sequence ID" value="AT1G14240.2"/>
    <property type="gene ID" value="AT1G14240"/>
</dbReference>
<dbReference type="Gramene" id="AT1G14240.4">
    <molecule id="Q9XI62-1"/>
    <property type="protein sequence ID" value="AT1G14240.4"/>
    <property type="gene ID" value="AT1G14240"/>
</dbReference>
<dbReference type="KEGG" id="ath:AT1G14240"/>
<dbReference type="Araport" id="AT1G14240"/>
<dbReference type="TAIR" id="AT1G14240">
    <property type="gene designation" value="APY3"/>
</dbReference>
<dbReference type="eggNOG" id="KOG1386">
    <property type="taxonomic scope" value="Eukaryota"/>
</dbReference>
<dbReference type="HOGENOM" id="CLU_010246_5_1_1"/>
<dbReference type="InParanoid" id="Q9XI62"/>
<dbReference type="OMA" id="FMLNFTN"/>
<dbReference type="PhylomeDB" id="Q9XI62"/>
<dbReference type="BioCyc" id="ARA:AT1G14240-MONOMER"/>
<dbReference type="BRENDA" id="3.6.1.5">
    <property type="organism ID" value="399"/>
</dbReference>
<dbReference type="PRO" id="PR:Q9XI62"/>
<dbReference type="Proteomes" id="UP000006548">
    <property type="component" value="Chromosome 1"/>
</dbReference>
<dbReference type="ExpressionAtlas" id="Q9XI62">
    <property type="expression patterns" value="baseline and differential"/>
</dbReference>
<dbReference type="GO" id="GO:0016020">
    <property type="term" value="C:membrane"/>
    <property type="evidence" value="ECO:0007669"/>
    <property type="project" value="UniProtKB-SubCell"/>
</dbReference>
<dbReference type="GO" id="GO:0004050">
    <property type="term" value="F:apyrase activity"/>
    <property type="evidence" value="ECO:0007669"/>
    <property type="project" value="UniProtKB-EC"/>
</dbReference>
<dbReference type="GO" id="GO:0005524">
    <property type="term" value="F:ATP binding"/>
    <property type="evidence" value="ECO:0007669"/>
    <property type="project" value="UniProtKB-KW"/>
</dbReference>
<dbReference type="CDD" id="cd24042">
    <property type="entry name" value="ASKHA_NBD_AtAPY3-like"/>
    <property type="match status" value="1"/>
</dbReference>
<dbReference type="Gene3D" id="3.30.420.40">
    <property type="match status" value="1"/>
</dbReference>
<dbReference type="Gene3D" id="3.30.420.150">
    <property type="entry name" value="Exopolyphosphatase. Domain 2"/>
    <property type="match status" value="1"/>
</dbReference>
<dbReference type="InterPro" id="IPR000407">
    <property type="entry name" value="GDA1_CD39_NTPase"/>
</dbReference>
<dbReference type="PANTHER" id="PTHR11782">
    <property type="entry name" value="ADENOSINE/GUANOSINE DIPHOSPHATASE"/>
    <property type="match status" value="1"/>
</dbReference>
<dbReference type="PANTHER" id="PTHR11782:SF100">
    <property type="entry name" value="APYRASE 3-RELATED"/>
    <property type="match status" value="1"/>
</dbReference>
<dbReference type="Pfam" id="PF01150">
    <property type="entry name" value="GDA1_CD39"/>
    <property type="match status" value="1"/>
</dbReference>
<dbReference type="PROSITE" id="PS01238">
    <property type="entry name" value="GDA1_CD39_NTPASE"/>
    <property type="match status" value="1"/>
</dbReference>
<accession>Q9XI62</accession>
<accession>Q3EDC8</accession>
<feature type="chain" id="PRO_0000420341" description="Probable apyrase 3">
    <location>
        <begin position="1"/>
        <end position="483"/>
    </location>
</feature>
<feature type="topological domain" description="Cytoplasmic" evidence="2">
    <location>
        <begin position="1"/>
        <end position="29"/>
    </location>
</feature>
<feature type="transmembrane region" description="Helical; Signal-anchor for type II membrane protein" evidence="2">
    <location>
        <begin position="30"/>
        <end position="50"/>
    </location>
</feature>
<feature type="topological domain" description="Extracellular" evidence="2">
    <location>
        <begin position="51"/>
        <end position="483"/>
    </location>
</feature>
<feature type="active site" description="Proton acceptor" evidence="1">
    <location>
        <position position="195"/>
    </location>
</feature>
<feature type="binding site" evidence="4">
    <location>
        <begin position="72"/>
        <end position="82"/>
    </location>
    <ligand>
        <name>ATP</name>
        <dbReference type="ChEBI" id="CHEBI:30616"/>
    </ligand>
</feature>
<feature type="binding site" evidence="4">
    <location>
        <begin position="219"/>
        <end position="229"/>
    </location>
    <ligand>
        <name>ATP</name>
        <dbReference type="ChEBI" id="CHEBI:30616"/>
    </ligand>
</feature>
<feature type="glycosylation site" description="N-linked (GlcNAc...) asparagine" evidence="2">
    <location>
        <position position="250"/>
    </location>
</feature>
<feature type="glycosylation site" description="N-linked (GlcNAc...) asparagine" evidence="2">
    <location>
        <position position="281"/>
    </location>
</feature>
<feature type="glycosylation site" description="N-linked (GlcNAc...) asparagine" evidence="2">
    <location>
        <position position="305"/>
    </location>
</feature>
<feature type="glycosylation site" description="N-linked (GlcNAc...) asparagine" evidence="2">
    <location>
        <position position="326"/>
    </location>
</feature>
<evidence type="ECO:0000250" key="1"/>
<evidence type="ECO:0000255" key="2"/>
<evidence type="ECO:0000269" key="3">
    <source ref="1"/>
</evidence>
<evidence type="ECO:0000305" key="4"/>
<organism>
    <name type="scientific">Arabidopsis thaliana</name>
    <name type="common">Mouse-ear cress</name>
    <dbReference type="NCBI Taxonomy" id="3702"/>
    <lineage>
        <taxon>Eukaryota</taxon>
        <taxon>Viridiplantae</taxon>
        <taxon>Streptophyta</taxon>
        <taxon>Embryophyta</taxon>
        <taxon>Tracheophyta</taxon>
        <taxon>Spermatophyta</taxon>
        <taxon>Magnoliopsida</taxon>
        <taxon>eudicotyledons</taxon>
        <taxon>Gunneridae</taxon>
        <taxon>Pentapetalae</taxon>
        <taxon>rosids</taxon>
        <taxon>malvids</taxon>
        <taxon>Brassicales</taxon>
        <taxon>Brassicaceae</taxon>
        <taxon>Camelineae</taxon>
        <taxon>Arabidopsis</taxon>
    </lineage>
</organism>
<proteinExistence type="evidence at transcript level"/>
<sequence length="483" mass="53426">MTPETDALKVQILPKHQSLPYTVTKAKSKSLILLVVVSVTITLGLLLYVFNSNSVISSGSLLSRRCKLRYSVLIDAGSSGTRVHVFGYWFESGKPVFDFGEKHYANLKLTPGLSSYADNPEGASVSVTKLVEFAKQRIPKRMFRRSDIRLMATAGMRLLEVPVQEQILEVTRRVLRSSGFMFRDEWANVISGSDEGIYSWITANYALGSLGTDPLETTGIVELGGASAQVTFVSSEHVPPEYSRTIAYGNISYTIYSHSFLDYGKDAALKKLLEKLQNSANSTVDGVVEDPCTPKGYIYDTNSKNYSSGFLADESKLKGSLQAAGNFSKCRSATFALLKEGKENCLYEHCSIGSTFTPDLQGSFLATASFYYTAKFFELEEKGWLSELIPAGKRYCGEEWSKLILEYPTTDEEYLRGYCFSAAYTISMLHDSLGIALDDESITYASKAGEKHIPLDWALGAFILDVVTPNSDYNGKSRKYLGF</sequence>
<protein>
    <recommendedName>
        <fullName>Probable apyrase 3</fullName>
        <shortName>AtAPY3</shortName>
        <ecNumber>3.6.1.5</ecNumber>
    </recommendedName>
    <alternativeName>
        <fullName>ATP-diphosphatase</fullName>
    </alternativeName>
    <alternativeName>
        <fullName>ATP-diphosphohydrolase</fullName>
    </alternativeName>
    <alternativeName>
        <fullName>Adenosine diphosphatase</fullName>
        <shortName>ADPase</shortName>
    </alternativeName>
    <alternativeName>
        <fullName>NTPDase</fullName>
    </alternativeName>
    <alternativeName>
        <fullName>Nucleoside triphosphate diphosphohydrolase 3</fullName>
    </alternativeName>
</protein>
<reference key="1">
    <citation type="thesis" date="2011" institute="University of Texas" country="United States">
        <title>Functional analyses of Arabidopsis apyrases 3 through 7.</title>
        <authorList>
            <person name="Yang J."/>
        </authorList>
    </citation>
    <scope>NUCLEOTIDE SEQUENCE [MRNA]</scope>
    <scope>DISRUPTION PHENOTYPE</scope>
    <scope>TISSUE SPECIFICITY</scope>
    <source>
        <strain>cv. Columbia</strain>
    </source>
</reference>
<reference key="2">
    <citation type="journal article" date="2000" name="Nature">
        <title>Sequence and analysis of chromosome 1 of the plant Arabidopsis thaliana.</title>
        <authorList>
            <person name="Theologis A."/>
            <person name="Ecker J.R."/>
            <person name="Palm C.J."/>
            <person name="Federspiel N.A."/>
            <person name="Kaul S."/>
            <person name="White O."/>
            <person name="Alonso J."/>
            <person name="Altafi H."/>
            <person name="Araujo R."/>
            <person name="Bowman C.L."/>
            <person name="Brooks S.Y."/>
            <person name="Buehler E."/>
            <person name="Chan A."/>
            <person name="Chao Q."/>
            <person name="Chen H."/>
            <person name="Cheuk R.F."/>
            <person name="Chin C.W."/>
            <person name="Chung M.K."/>
            <person name="Conn L."/>
            <person name="Conway A.B."/>
            <person name="Conway A.R."/>
            <person name="Creasy T.H."/>
            <person name="Dewar K."/>
            <person name="Dunn P."/>
            <person name="Etgu P."/>
            <person name="Feldblyum T.V."/>
            <person name="Feng J.-D."/>
            <person name="Fong B."/>
            <person name="Fujii C.Y."/>
            <person name="Gill J.E."/>
            <person name="Goldsmith A.D."/>
            <person name="Haas B."/>
            <person name="Hansen N.F."/>
            <person name="Hughes B."/>
            <person name="Huizar L."/>
            <person name="Hunter J.L."/>
            <person name="Jenkins J."/>
            <person name="Johnson-Hopson C."/>
            <person name="Khan S."/>
            <person name="Khaykin E."/>
            <person name="Kim C.J."/>
            <person name="Koo H.L."/>
            <person name="Kremenetskaia I."/>
            <person name="Kurtz D.B."/>
            <person name="Kwan A."/>
            <person name="Lam B."/>
            <person name="Langin-Hooper S."/>
            <person name="Lee A."/>
            <person name="Lee J.M."/>
            <person name="Lenz C.A."/>
            <person name="Li J.H."/>
            <person name="Li Y.-P."/>
            <person name="Lin X."/>
            <person name="Liu S.X."/>
            <person name="Liu Z.A."/>
            <person name="Luros J.S."/>
            <person name="Maiti R."/>
            <person name="Marziali A."/>
            <person name="Militscher J."/>
            <person name="Miranda M."/>
            <person name="Nguyen M."/>
            <person name="Nierman W.C."/>
            <person name="Osborne B.I."/>
            <person name="Pai G."/>
            <person name="Peterson J."/>
            <person name="Pham P.K."/>
            <person name="Rizzo M."/>
            <person name="Rooney T."/>
            <person name="Rowley D."/>
            <person name="Sakano H."/>
            <person name="Salzberg S.L."/>
            <person name="Schwartz J.R."/>
            <person name="Shinn P."/>
            <person name="Southwick A.M."/>
            <person name="Sun H."/>
            <person name="Tallon L.J."/>
            <person name="Tambunga G."/>
            <person name="Toriumi M.J."/>
            <person name="Town C.D."/>
            <person name="Utterback T."/>
            <person name="Van Aken S."/>
            <person name="Vaysberg M."/>
            <person name="Vysotskaia V.S."/>
            <person name="Walker M."/>
            <person name="Wu D."/>
            <person name="Yu G."/>
            <person name="Fraser C.M."/>
            <person name="Venter J.C."/>
            <person name="Davis R.W."/>
        </authorList>
    </citation>
    <scope>NUCLEOTIDE SEQUENCE [LARGE SCALE GENOMIC DNA]</scope>
    <source>
        <strain>cv. Columbia</strain>
    </source>
</reference>
<reference key="3">
    <citation type="journal article" date="2017" name="Plant J.">
        <title>Araport11: a complete reannotation of the Arabidopsis thaliana reference genome.</title>
        <authorList>
            <person name="Cheng C.Y."/>
            <person name="Krishnakumar V."/>
            <person name="Chan A.P."/>
            <person name="Thibaud-Nissen F."/>
            <person name="Schobel S."/>
            <person name="Town C.D."/>
        </authorList>
    </citation>
    <scope>GENOME REANNOTATION</scope>
    <source>
        <strain>cv. Columbia</strain>
    </source>
</reference>
<reference key="4">
    <citation type="journal article" date="2003" name="Science">
        <title>Empirical analysis of transcriptional activity in the Arabidopsis genome.</title>
        <authorList>
            <person name="Yamada K."/>
            <person name="Lim J."/>
            <person name="Dale J.M."/>
            <person name="Chen H."/>
            <person name="Shinn P."/>
            <person name="Palm C.J."/>
            <person name="Southwick A.M."/>
            <person name="Wu H.C."/>
            <person name="Kim C.J."/>
            <person name="Nguyen M."/>
            <person name="Pham P.K."/>
            <person name="Cheuk R.F."/>
            <person name="Karlin-Newmann G."/>
            <person name="Liu S.X."/>
            <person name="Lam B."/>
            <person name="Sakano H."/>
            <person name="Wu T."/>
            <person name="Yu G."/>
            <person name="Miranda M."/>
            <person name="Quach H.L."/>
            <person name="Tripp M."/>
            <person name="Chang C.H."/>
            <person name="Lee J.M."/>
            <person name="Toriumi M.J."/>
            <person name="Chan M.M."/>
            <person name="Tang C.C."/>
            <person name="Onodera C.S."/>
            <person name="Deng J.M."/>
            <person name="Akiyama K."/>
            <person name="Ansari Y."/>
            <person name="Arakawa T."/>
            <person name="Banh J."/>
            <person name="Banno F."/>
            <person name="Bowser L."/>
            <person name="Brooks S.Y."/>
            <person name="Carninci P."/>
            <person name="Chao Q."/>
            <person name="Choy N."/>
            <person name="Enju A."/>
            <person name="Goldsmith A.D."/>
            <person name="Gurjal M."/>
            <person name="Hansen N.F."/>
            <person name="Hayashizaki Y."/>
            <person name="Johnson-Hopson C."/>
            <person name="Hsuan V.W."/>
            <person name="Iida K."/>
            <person name="Karnes M."/>
            <person name="Khan S."/>
            <person name="Koesema E."/>
            <person name="Ishida J."/>
            <person name="Jiang P.X."/>
            <person name="Jones T."/>
            <person name="Kawai J."/>
            <person name="Kamiya A."/>
            <person name="Meyers C."/>
            <person name="Nakajima M."/>
            <person name="Narusaka M."/>
            <person name="Seki M."/>
            <person name="Sakurai T."/>
            <person name="Satou M."/>
            <person name="Tamse R."/>
            <person name="Vaysberg M."/>
            <person name="Wallender E.K."/>
            <person name="Wong C."/>
            <person name="Yamamura Y."/>
            <person name="Yuan S."/>
            <person name="Shinozaki K."/>
            <person name="Davis R.W."/>
            <person name="Theologis A."/>
            <person name="Ecker J.R."/>
        </authorList>
    </citation>
    <scope>NUCLEOTIDE SEQUENCE [LARGE SCALE MRNA]</scope>
    <source>
        <strain>cv. Columbia</strain>
    </source>
</reference>
<reference key="5">
    <citation type="submission" date="2006-07" db="EMBL/GenBank/DDBJ databases">
        <title>Large-scale analysis of RIKEN Arabidopsis full-length (RAFL) cDNAs.</title>
        <authorList>
            <person name="Totoki Y."/>
            <person name="Seki M."/>
            <person name="Ishida J."/>
            <person name="Nakajima M."/>
            <person name="Enju A."/>
            <person name="Kamiya A."/>
            <person name="Narusaka M."/>
            <person name="Shin-i T."/>
            <person name="Nakagawa M."/>
            <person name="Sakamoto N."/>
            <person name="Oishi K."/>
            <person name="Kohara Y."/>
            <person name="Kobayashi M."/>
            <person name="Toyoda A."/>
            <person name="Sakaki Y."/>
            <person name="Sakurai T."/>
            <person name="Iida K."/>
            <person name="Akiyama K."/>
            <person name="Satou M."/>
            <person name="Toyoda T."/>
            <person name="Konagaya A."/>
            <person name="Carninci P."/>
            <person name="Kawai J."/>
            <person name="Hayashizaki Y."/>
            <person name="Shinozaki K."/>
        </authorList>
    </citation>
    <scope>NUCLEOTIDE SEQUENCE [LARGE SCALE MRNA]</scope>
    <source>
        <strain>cv. Columbia</strain>
    </source>
</reference>
<reference key="6">
    <citation type="journal article" date="2009" name="DNA Res.">
        <title>Analysis of multiple occurrences of alternative splicing events in Arabidopsis thaliana using novel sequenced full-length cDNAs.</title>
        <authorList>
            <person name="Iida K."/>
            <person name="Fukami-Kobayashi K."/>
            <person name="Toyoda A."/>
            <person name="Sakaki Y."/>
            <person name="Kobayashi M."/>
            <person name="Seki M."/>
            <person name="Shinozaki K."/>
        </authorList>
    </citation>
    <scope>NUCLEOTIDE SEQUENCE [LARGE SCALE MRNA]</scope>
    <source>
        <strain>cv. Columbia</strain>
        <tissue>Root</tissue>
    </source>
</reference>